<protein>
    <recommendedName>
        <fullName evidence="2">D-alanine--D-alanine ligase</fullName>
        <ecNumber evidence="2">6.3.2.4</ecNumber>
    </recommendedName>
    <alternativeName>
        <fullName evidence="2">D-Ala-D-Ala ligase</fullName>
    </alternativeName>
    <alternativeName>
        <fullName evidence="2">D-alanylalanine synthetase</fullName>
    </alternativeName>
</protein>
<comment type="function">
    <text evidence="2">Cell wall formation.</text>
</comment>
<comment type="catalytic activity">
    <reaction evidence="2">
        <text>2 D-alanine + ATP = D-alanyl-D-alanine + ADP + phosphate + H(+)</text>
        <dbReference type="Rhea" id="RHEA:11224"/>
        <dbReference type="ChEBI" id="CHEBI:15378"/>
        <dbReference type="ChEBI" id="CHEBI:30616"/>
        <dbReference type="ChEBI" id="CHEBI:43474"/>
        <dbReference type="ChEBI" id="CHEBI:57416"/>
        <dbReference type="ChEBI" id="CHEBI:57822"/>
        <dbReference type="ChEBI" id="CHEBI:456216"/>
        <dbReference type="EC" id="6.3.2.4"/>
    </reaction>
</comment>
<comment type="cofactor">
    <cofactor evidence="1">
        <name>Mg(2+)</name>
        <dbReference type="ChEBI" id="CHEBI:18420"/>
    </cofactor>
    <cofactor evidence="1">
        <name>Mn(2+)</name>
        <dbReference type="ChEBI" id="CHEBI:29035"/>
    </cofactor>
    <text evidence="1">Binds 2 magnesium or manganese ions per subunit.</text>
</comment>
<comment type="pathway">
    <text evidence="2">Cell wall biogenesis; peptidoglycan biosynthesis.</text>
</comment>
<comment type="subcellular location">
    <subcellularLocation>
        <location evidence="2">Cytoplasm</location>
    </subcellularLocation>
</comment>
<comment type="similarity">
    <text evidence="2">Belongs to the D-alanine--D-alanine ligase family.</text>
</comment>
<name>DDL_BACLD</name>
<organism>
    <name type="scientific">Bacillus licheniformis (strain ATCC 14580 / DSM 13 / JCM 2505 / CCUG 7422 / NBRC 12200 / NCIMB 9375 / NCTC 10341 / NRRL NRS-1264 / Gibson 46)</name>
    <dbReference type="NCBI Taxonomy" id="279010"/>
    <lineage>
        <taxon>Bacteria</taxon>
        <taxon>Bacillati</taxon>
        <taxon>Bacillota</taxon>
        <taxon>Bacilli</taxon>
        <taxon>Bacillales</taxon>
        <taxon>Bacillaceae</taxon>
        <taxon>Bacillus</taxon>
    </lineage>
</organism>
<proteinExistence type="inferred from homology"/>
<accession>Q65N65</accession>
<accession>Q62YL4</accession>
<sequence length="361" mass="40057">MKTRLGLVYGGKSAEHNVSLQTALAVTKALDTEKFDIHPIYITEKGEWVRGPQLTEPVSNVKMLQFEQTGQTFSPAVLNRDMFPGEADAKEDSIDVVFPLLHGPNGEDGTIQGMLELLNVPYVGNGVLASSAGMDKVVMKHLFAQAGLDQAKYVSFLKKTWSQSKEECYAQVEGELGYPCFVKPANLGSSVGISKCRSREELDQAFELAFQYDRKIVVEEGVIGREIELGVLGNDEPVCSVAGEIAPKKDFYDYKAKYEDGDTDLIIPASLTEDEYETMRSMAVKAFQAIDGSGLVRADFFLTNEGRVLINEVNTMPGFTPFSMFPLLWKQSGVEYAELIEKLVALAIERHEEKQQIKHTF</sequence>
<feature type="chain" id="PRO_1000030426" description="D-alanine--D-alanine ligase">
    <location>
        <begin position="1"/>
        <end position="361"/>
    </location>
</feature>
<feature type="domain" description="ATP-grasp" evidence="2">
    <location>
        <begin position="140"/>
        <end position="345"/>
    </location>
</feature>
<feature type="binding site" evidence="2">
    <location>
        <begin position="173"/>
        <end position="228"/>
    </location>
    <ligand>
        <name>ATP</name>
        <dbReference type="ChEBI" id="CHEBI:30616"/>
    </ligand>
</feature>
<feature type="binding site" evidence="2">
    <location>
        <position position="299"/>
    </location>
    <ligand>
        <name>Mg(2+)</name>
        <dbReference type="ChEBI" id="CHEBI:18420"/>
        <label>1</label>
    </ligand>
</feature>
<feature type="binding site" evidence="2">
    <location>
        <position position="312"/>
    </location>
    <ligand>
        <name>Mg(2+)</name>
        <dbReference type="ChEBI" id="CHEBI:18420"/>
        <label>1</label>
    </ligand>
</feature>
<feature type="binding site" evidence="2">
    <location>
        <position position="312"/>
    </location>
    <ligand>
        <name>Mg(2+)</name>
        <dbReference type="ChEBI" id="CHEBI:18420"/>
        <label>2</label>
    </ligand>
</feature>
<feature type="binding site" evidence="2">
    <location>
        <position position="314"/>
    </location>
    <ligand>
        <name>Mg(2+)</name>
        <dbReference type="ChEBI" id="CHEBI:18420"/>
        <label>2</label>
    </ligand>
</feature>
<reference key="1">
    <citation type="journal article" date="2004" name="J. Mol. Microbiol. Biotechnol.">
        <title>The complete genome sequence of Bacillus licheniformis DSM13, an organism with great industrial potential.</title>
        <authorList>
            <person name="Veith B."/>
            <person name="Herzberg C."/>
            <person name="Steckel S."/>
            <person name="Feesche J."/>
            <person name="Maurer K.H."/>
            <person name="Ehrenreich P."/>
            <person name="Baeumer S."/>
            <person name="Henne A."/>
            <person name="Liesegang H."/>
            <person name="Merkl R."/>
            <person name="Ehrenreich A."/>
            <person name="Gottschalk G."/>
        </authorList>
    </citation>
    <scope>NUCLEOTIDE SEQUENCE [LARGE SCALE GENOMIC DNA]</scope>
    <source>
        <strain>ATCC 14580 / DSM 13 / JCM 2505 / CCUG 7422 / NBRC 12200 / NCIMB 9375 / NCTC 10341 / NRRL NRS-1264 / Gibson 46</strain>
    </source>
</reference>
<reference key="2">
    <citation type="journal article" date="2004" name="Genome Biol.">
        <title>Complete genome sequence of the industrial bacterium Bacillus licheniformis and comparisons with closely related Bacillus species.</title>
        <authorList>
            <person name="Rey M.W."/>
            <person name="Ramaiya P."/>
            <person name="Nelson B.A."/>
            <person name="Brody-Karpin S.D."/>
            <person name="Zaretsky E.J."/>
            <person name="Tang M."/>
            <person name="Lopez de Leon A."/>
            <person name="Xiang H."/>
            <person name="Gusti V."/>
            <person name="Clausen I.G."/>
            <person name="Olsen P.B."/>
            <person name="Rasmussen M.D."/>
            <person name="Andersen J.T."/>
            <person name="Joergensen P.L."/>
            <person name="Larsen T.S."/>
            <person name="Sorokin A."/>
            <person name="Bolotin A."/>
            <person name="Lapidus A."/>
            <person name="Galleron N."/>
            <person name="Ehrlich S.D."/>
            <person name="Berka R.M."/>
        </authorList>
    </citation>
    <scope>NUCLEOTIDE SEQUENCE [LARGE SCALE GENOMIC DNA]</scope>
    <source>
        <strain>ATCC 14580 / DSM 13 / JCM 2505 / CCUG 7422 / NBRC 12200 / NCIMB 9375 / NCTC 10341 / NRRL NRS-1264 / Gibson 46</strain>
    </source>
</reference>
<dbReference type="EC" id="6.3.2.4" evidence="2"/>
<dbReference type="EMBL" id="CP000002">
    <property type="protein sequence ID" value="AAU22144.1"/>
    <property type="molecule type" value="Genomic_DNA"/>
</dbReference>
<dbReference type="EMBL" id="AE017333">
    <property type="protein sequence ID" value="AAU39499.1"/>
    <property type="molecule type" value="Genomic_DNA"/>
</dbReference>
<dbReference type="RefSeq" id="WP_003179106.1">
    <property type="nucleotide sequence ID" value="NC_006322.1"/>
</dbReference>
<dbReference type="SMR" id="Q65N65"/>
<dbReference type="STRING" id="279010.BL02193"/>
<dbReference type="KEGG" id="bld:BLi00543"/>
<dbReference type="KEGG" id="bli:BL02193"/>
<dbReference type="eggNOG" id="COG1181">
    <property type="taxonomic scope" value="Bacteria"/>
</dbReference>
<dbReference type="HOGENOM" id="CLU_039268_0_0_9"/>
<dbReference type="UniPathway" id="UPA00219"/>
<dbReference type="Proteomes" id="UP000000606">
    <property type="component" value="Chromosome"/>
</dbReference>
<dbReference type="GO" id="GO:0005829">
    <property type="term" value="C:cytosol"/>
    <property type="evidence" value="ECO:0007669"/>
    <property type="project" value="TreeGrafter"/>
</dbReference>
<dbReference type="GO" id="GO:0005524">
    <property type="term" value="F:ATP binding"/>
    <property type="evidence" value="ECO:0007669"/>
    <property type="project" value="UniProtKB-KW"/>
</dbReference>
<dbReference type="GO" id="GO:0008716">
    <property type="term" value="F:D-alanine-D-alanine ligase activity"/>
    <property type="evidence" value="ECO:0007669"/>
    <property type="project" value="UniProtKB-UniRule"/>
</dbReference>
<dbReference type="GO" id="GO:0046872">
    <property type="term" value="F:metal ion binding"/>
    <property type="evidence" value="ECO:0007669"/>
    <property type="project" value="UniProtKB-KW"/>
</dbReference>
<dbReference type="GO" id="GO:0071555">
    <property type="term" value="P:cell wall organization"/>
    <property type="evidence" value="ECO:0007669"/>
    <property type="project" value="UniProtKB-KW"/>
</dbReference>
<dbReference type="GO" id="GO:0009252">
    <property type="term" value="P:peptidoglycan biosynthetic process"/>
    <property type="evidence" value="ECO:0007669"/>
    <property type="project" value="UniProtKB-UniRule"/>
</dbReference>
<dbReference type="GO" id="GO:0008360">
    <property type="term" value="P:regulation of cell shape"/>
    <property type="evidence" value="ECO:0007669"/>
    <property type="project" value="UniProtKB-KW"/>
</dbReference>
<dbReference type="FunFam" id="3.30.1490.20:FF:000007">
    <property type="entry name" value="D-alanine--D-alanine ligase"/>
    <property type="match status" value="1"/>
</dbReference>
<dbReference type="FunFam" id="3.30.470.20:FF:000008">
    <property type="entry name" value="D-alanine--D-alanine ligase"/>
    <property type="match status" value="1"/>
</dbReference>
<dbReference type="Gene3D" id="3.40.50.20">
    <property type="match status" value="1"/>
</dbReference>
<dbReference type="Gene3D" id="3.30.1490.20">
    <property type="entry name" value="ATP-grasp fold, A domain"/>
    <property type="match status" value="1"/>
</dbReference>
<dbReference type="Gene3D" id="3.30.470.20">
    <property type="entry name" value="ATP-grasp fold, B domain"/>
    <property type="match status" value="1"/>
</dbReference>
<dbReference type="HAMAP" id="MF_00047">
    <property type="entry name" value="Dala_Dala_lig"/>
    <property type="match status" value="1"/>
</dbReference>
<dbReference type="InterPro" id="IPR011761">
    <property type="entry name" value="ATP-grasp"/>
</dbReference>
<dbReference type="InterPro" id="IPR013815">
    <property type="entry name" value="ATP_grasp_subdomain_1"/>
</dbReference>
<dbReference type="InterPro" id="IPR000291">
    <property type="entry name" value="D-Ala_lig_Van_CS"/>
</dbReference>
<dbReference type="InterPro" id="IPR005905">
    <property type="entry name" value="D_ala_D_ala"/>
</dbReference>
<dbReference type="InterPro" id="IPR011095">
    <property type="entry name" value="Dala_Dala_lig_C"/>
</dbReference>
<dbReference type="InterPro" id="IPR011127">
    <property type="entry name" value="Dala_Dala_lig_N"/>
</dbReference>
<dbReference type="InterPro" id="IPR016185">
    <property type="entry name" value="PreATP-grasp_dom_sf"/>
</dbReference>
<dbReference type="NCBIfam" id="TIGR01205">
    <property type="entry name" value="D_ala_D_alaTIGR"/>
    <property type="match status" value="1"/>
</dbReference>
<dbReference type="NCBIfam" id="NF002378">
    <property type="entry name" value="PRK01372.1"/>
    <property type="match status" value="1"/>
</dbReference>
<dbReference type="NCBIfam" id="NF002526">
    <property type="entry name" value="PRK01966.1-2"/>
    <property type="match status" value="1"/>
</dbReference>
<dbReference type="NCBIfam" id="NF002528">
    <property type="entry name" value="PRK01966.1-4"/>
    <property type="match status" value="1"/>
</dbReference>
<dbReference type="PANTHER" id="PTHR23132">
    <property type="entry name" value="D-ALANINE--D-ALANINE LIGASE"/>
    <property type="match status" value="1"/>
</dbReference>
<dbReference type="PANTHER" id="PTHR23132:SF25">
    <property type="entry name" value="D-ALANINE--D-ALANINE LIGASE A"/>
    <property type="match status" value="1"/>
</dbReference>
<dbReference type="Pfam" id="PF07478">
    <property type="entry name" value="Dala_Dala_lig_C"/>
    <property type="match status" value="1"/>
</dbReference>
<dbReference type="Pfam" id="PF01820">
    <property type="entry name" value="Dala_Dala_lig_N"/>
    <property type="match status" value="1"/>
</dbReference>
<dbReference type="PIRSF" id="PIRSF039102">
    <property type="entry name" value="Ddl/VanB"/>
    <property type="match status" value="1"/>
</dbReference>
<dbReference type="SUPFAM" id="SSF56059">
    <property type="entry name" value="Glutathione synthetase ATP-binding domain-like"/>
    <property type="match status" value="1"/>
</dbReference>
<dbReference type="SUPFAM" id="SSF52440">
    <property type="entry name" value="PreATP-grasp domain"/>
    <property type="match status" value="1"/>
</dbReference>
<dbReference type="PROSITE" id="PS50975">
    <property type="entry name" value="ATP_GRASP"/>
    <property type="match status" value="1"/>
</dbReference>
<dbReference type="PROSITE" id="PS00843">
    <property type="entry name" value="DALA_DALA_LIGASE_1"/>
    <property type="match status" value="1"/>
</dbReference>
<dbReference type="PROSITE" id="PS00844">
    <property type="entry name" value="DALA_DALA_LIGASE_2"/>
    <property type="match status" value="1"/>
</dbReference>
<evidence type="ECO:0000250" key="1"/>
<evidence type="ECO:0000255" key="2">
    <source>
        <dbReference type="HAMAP-Rule" id="MF_00047"/>
    </source>
</evidence>
<keyword id="KW-0067">ATP-binding</keyword>
<keyword id="KW-0133">Cell shape</keyword>
<keyword id="KW-0961">Cell wall biogenesis/degradation</keyword>
<keyword id="KW-0963">Cytoplasm</keyword>
<keyword id="KW-0436">Ligase</keyword>
<keyword id="KW-0460">Magnesium</keyword>
<keyword id="KW-0464">Manganese</keyword>
<keyword id="KW-0479">Metal-binding</keyword>
<keyword id="KW-0547">Nucleotide-binding</keyword>
<keyword id="KW-0573">Peptidoglycan synthesis</keyword>
<keyword id="KW-1185">Reference proteome</keyword>
<gene>
    <name evidence="2" type="primary">ddl</name>
    <name type="ordered locus">BLi00543</name>
    <name type="ordered locus">BL02193</name>
</gene>